<organism>
    <name type="scientific">Cryptococcus neoformans var. neoformans serotype D (strain B-3501A)</name>
    <name type="common">Filobasidiella neoformans</name>
    <dbReference type="NCBI Taxonomy" id="283643"/>
    <lineage>
        <taxon>Eukaryota</taxon>
        <taxon>Fungi</taxon>
        <taxon>Dikarya</taxon>
        <taxon>Basidiomycota</taxon>
        <taxon>Agaricomycotina</taxon>
        <taxon>Tremellomycetes</taxon>
        <taxon>Tremellales</taxon>
        <taxon>Cryptococcaceae</taxon>
        <taxon>Cryptococcus</taxon>
        <taxon>Cryptococcus neoformans species complex</taxon>
    </lineage>
</organism>
<keyword id="KW-0963">Cytoplasm</keyword>
<keyword id="KW-0413">Isomerase</keyword>
<keyword id="KW-0697">Rotamase</keyword>
<gene>
    <name type="primary">RRD2</name>
    <name type="ordered locus">CNBL1550</name>
</gene>
<proteinExistence type="inferred from homology"/>
<accession>P0CQ03</accession>
<accession>Q55J30</accession>
<accession>Q5KCM5</accession>
<feature type="chain" id="PRO_0000410211" description="Serine/threonine-protein phosphatase 2A activator 2">
    <location>
        <begin position="1"/>
        <end position="382"/>
    </location>
</feature>
<feature type="region of interest" description="Disordered" evidence="2">
    <location>
        <begin position="363"/>
        <end position="382"/>
    </location>
</feature>
<evidence type="ECO:0000250" key="1"/>
<evidence type="ECO:0000256" key="2">
    <source>
        <dbReference type="SAM" id="MobiDB-lite"/>
    </source>
</evidence>
<evidence type="ECO:0000305" key="3"/>
<sequence>MSAPESSPSTFYTVPTKHILSKAHLAAFQRSKTHSDIFNFIEELNEDIVGKKLTEAGQGSERTRPLISILDSVREIAESTPPVDNKLSRFGNPAFKTFYDKVGDASLELHKRIPGLPEEAIQEVEVYFKESWGNKQRVDYGSGMELNFLSWLLCLAKLGVVTKEDYPFLVLGVFWRYIEVMRYLQSTYWLEPAGSHGVWGLDDYHFLPFLWGSGQLRNHKYLRPKAIHDPEILGEFSKDYMYLSCIEFINSIKTASLRWHSPMLDDISAVKTWEKVNQGMKKMFVAEVLGKLPVMQHALFGSLLPFPTPEEDPELKRALEEEDGQSATDMHGHIHDPSEKGWSMDCCGIPVPSAFAAAQDANSHKGVPTLGNRPGIKPIPFD</sequence>
<name>PTPA2_CRYNB</name>
<dbReference type="EC" id="5.2.1.8"/>
<dbReference type="EMBL" id="AAEY01000057">
    <property type="protein sequence ID" value="EAL17640.1"/>
    <property type="molecule type" value="Genomic_DNA"/>
</dbReference>
<dbReference type="RefSeq" id="XP_772287.1">
    <property type="nucleotide sequence ID" value="XM_767194.1"/>
</dbReference>
<dbReference type="SMR" id="P0CQ03"/>
<dbReference type="EnsemblFungi" id="AAW45033">
    <property type="protein sequence ID" value="AAW45033"/>
    <property type="gene ID" value="CNH01590"/>
</dbReference>
<dbReference type="GeneID" id="4939204"/>
<dbReference type="KEGG" id="cnb:CNBL1550"/>
<dbReference type="VEuPathDB" id="FungiDB:CNBL1550"/>
<dbReference type="HOGENOM" id="CLU_030733_0_0_1"/>
<dbReference type="OrthoDB" id="363at5206"/>
<dbReference type="GO" id="GO:0005737">
    <property type="term" value="C:cytoplasm"/>
    <property type="evidence" value="ECO:0007669"/>
    <property type="project" value="UniProtKB-SubCell"/>
</dbReference>
<dbReference type="GO" id="GO:0005634">
    <property type="term" value="C:nucleus"/>
    <property type="evidence" value="ECO:0007669"/>
    <property type="project" value="TreeGrafter"/>
</dbReference>
<dbReference type="GO" id="GO:0000159">
    <property type="term" value="C:protein phosphatase type 2A complex"/>
    <property type="evidence" value="ECO:0007669"/>
    <property type="project" value="EnsemblFungi"/>
</dbReference>
<dbReference type="GO" id="GO:0003755">
    <property type="term" value="F:peptidyl-prolyl cis-trans isomerase activity"/>
    <property type="evidence" value="ECO:0007669"/>
    <property type="project" value="UniProtKB-KW"/>
</dbReference>
<dbReference type="GO" id="GO:0008160">
    <property type="term" value="F:protein tyrosine phosphatase activator activity"/>
    <property type="evidence" value="ECO:0007669"/>
    <property type="project" value="TreeGrafter"/>
</dbReference>
<dbReference type="GO" id="GO:0007052">
    <property type="term" value="P:mitotic spindle organization"/>
    <property type="evidence" value="ECO:0007669"/>
    <property type="project" value="EnsemblFungi"/>
</dbReference>
<dbReference type="GO" id="GO:0006970">
    <property type="term" value="P:response to osmotic stress"/>
    <property type="evidence" value="ECO:0007669"/>
    <property type="project" value="EnsemblFungi"/>
</dbReference>
<dbReference type="CDD" id="cd04087">
    <property type="entry name" value="PTPA"/>
    <property type="match status" value="1"/>
</dbReference>
<dbReference type="FunFam" id="1.20.120.1150:FF:000002">
    <property type="entry name" value="Serine/threonine-protein phosphatase 2A activator"/>
    <property type="match status" value="1"/>
</dbReference>
<dbReference type="Gene3D" id="1.20.120.1150">
    <property type="match status" value="1"/>
</dbReference>
<dbReference type="InterPro" id="IPR004327">
    <property type="entry name" value="Phstyr_phstse_ac"/>
</dbReference>
<dbReference type="InterPro" id="IPR043170">
    <property type="entry name" value="PTPA_C_lid"/>
</dbReference>
<dbReference type="InterPro" id="IPR037218">
    <property type="entry name" value="PTPA_sf"/>
</dbReference>
<dbReference type="PANTHER" id="PTHR10012">
    <property type="entry name" value="SERINE/THREONINE-PROTEIN PHOSPHATASE 2A REGULATORY SUBUNIT B"/>
    <property type="match status" value="1"/>
</dbReference>
<dbReference type="PANTHER" id="PTHR10012:SF5">
    <property type="entry name" value="SERINE_THREONINE-PROTEIN PHOSPHATASE 2A ACTIVATOR 2"/>
    <property type="match status" value="1"/>
</dbReference>
<dbReference type="Pfam" id="PF03095">
    <property type="entry name" value="PTPA"/>
    <property type="match status" value="1"/>
</dbReference>
<dbReference type="PIRSF" id="PIRSF016325">
    <property type="entry name" value="Phstyr_phstse_ac"/>
    <property type="match status" value="1"/>
</dbReference>
<dbReference type="SUPFAM" id="SSF140984">
    <property type="entry name" value="PTPA-like"/>
    <property type="match status" value="1"/>
</dbReference>
<protein>
    <recommendedName>
        <fullName>Serine/threonine-protein phosphatase 2A activator 2</fullName>
        <ecNumber>5.2.1.8</ecNumber>
    </recommendedName>
    <alternativeName>
        <fullName>Peptidyl-prolyl cis-trans isomerase PTPA-2</fullName>
        <shortName>PPIase PTPA-2</shortName>
        <shortName>Rotamase PTPA-2</shortName>
    </alternativeName>
    <alternativeName>
        <fullName>Phosphotyrosyl phosphatase activator 2</fullName>
    </alternativeName>
</protein>
<reference key="1">
    <citation type="journal article" date="2005" name="Science">
        <title>The genome of the basidiomycetous yeast and human pathogen Cryptococcus neoformans.</title>
        <authorList>
            <person name="Loftus B.J."/>
            <person name="Fung E."/>
            <person name="Roncaglia P."/>
            <person name="Rowley D."/>
            <person name="Amedeo P."/>
            <person name="Bruno D."/>
            <person name="Vamathevan J."/>
            <person name="Miranda M."/>
            <person name="Anderson I.J."/>
            <person name="Fraser J.A."/>
            <person name="Allen J.E."/>
            <person name="Bosdet I.E."/>
            <person name="Brent M.R."/>
            <person name="Chiu R."/>
            <person name="Doering T.L."/>
            <person name="Donlin M.J."/>
            <person name="D'Souza C.A."/>
            <person name="Fox D.S."/>
            <person name="Grinberg V."/>
            <person name="Fu J."/>
            <person name="Fukushima M."/>
            <person name="Haas B.J."/>
            <person name="Huang J.C."/>
            <person name="Janbon G."/>
            <person name="Jones S.J.M."/>
            <person name="Koo H.L."/>
            <person name="Krzywinski M.I."/>
            <person name="Kwon-Chung K.J."/>
            <person name="Lengeler K.B."/>
            <person name="Maiti R."/>
            <person name="Marra M.A."/>
            <person name="Marra R.E."/>
            <person name="Mathewson C.A."/>
            <person name="Mitchell T.G."/>
            <person name="Pertea M."/>
            <person name="Riggs F.R."/>
            <person name="Salzberg S.L."/>
            <person name="Schein J.E."/>
            <person name="Shvartsbeyn A."/>
            <person name="Shin H."/>
            <person name="Shumway M."/>
            <person name="Specht C.A."/>
            <person name="Suh B.B."/>
            <person name="Tenney A."/>
            <person name="Utterback T.R."/>
            <person name="Wickes B.L."/>
            <person name="Wortman J.R."/>
            <person name="Wye N.H."/>
            <person name="Kronstad J.W."/>
            <person name="Lodge J.K."/>
            <person name="Heitman J."/>
            <person name="Davis R.W."/>
            <person name="Fraser C.M."/>
            <person name="Hyman R.W."/>
        </authorList>
    </citation>
    <scope>NUCLEOTIDE SEQUENCE [LARGE SCALE GENOMIC DNA]</scope>
    <source>
        <strain>B-3501A</strain>
    </source>
</reference>
<comment type="function">
    <text evidence="1">PPIases accelerate the folding of proteins. It catalyzes the cis-trans isomerization of proline imidic peptide bonds in oligopeptides. Acts as a regulatory subunit for PP2A-like phosphatases modulating their activity or substrate specificity, probably by inducing a conformational change in the catalytic subunit, a direct target of the PPIase. Can reactivate inactive phosphatase PP2A-phosphatase methylesterase complexes (PP2Ai) in presence of ATP and Mg(2+) by dissociating the inactive form from the complex (By similarity).</text>
</comment>
<comment type="catalytic activity">
    <reaction>
        <text>[protein]-peptidylproline (omega=180) = [protein]-peptidylproline (omega=0)</text>
        <dbReference type="Rhea" id="RHEA:16237"/>
        <dbReference type="Rhea" id="RHEA-COMP:10747"/>
        <dbReference type="Rhea" id="RHEA-COMP:10748"/>
        <dbReference type="ChEBI" id="CHEBI:83833"/>
        <dbReference type="ChEBI" id="CHEBI:83834"/>
        <dbReference type="EC" id="5.2.1.8"/>
    </reaction>
</comment>
<comment type="subcellular location">
    <subcellularLocation>
        <location evidence="1">Cytoplasm</location>
    </subcellularLocation>
</comment>
<comment type="similarity">
    <text evidence="3">Belongs to the PTPA-type PPIase family.</text>
</comment>